<protein>
    <recommendedName>
        <fullName evidence="4">Putative sodium channel toxin Ts18</fullName>
    </recommendedName>
    <alternativeName>
        <fullName evidence="4">Putative alpha-NaTx</fullName>
    </alternativeName>
    <alternativeName>
        <fullName evidence="5">Putative alpha-toxin</fullName>
    </alternativeName>
    <alternativeName>
        <fullName evidence="7">Tityustoxin-18</fullName>
    </alternativeName>
</protein>
<evidence type="ECO:0000250" key="1">
    <source>
        <dbReference type="UniProtKB" id="Q4LCS8"/>
    </source>
</evidence>
<evidence type="ECO:0000255" key="2"/>
<evidence type="ECO:0000255" key="3">
    <source>
        <dbReference type="PROSITE-ProRule" id="PRU01210"/>
    </source>
</evidence>
<evidence type="ECO:0000303" key="4">
    <source>
    </source>
</evidence>
<evidence type="ECO:0000303" key="5">
    <source ref="1"/>
</evidence>
<evidence type="ECO:0000305" key="6"/>
<evidence type="ECO:0000305" key="7">
    <source>
    </source>
</evidence>
<evidence type="ECO:0000305" key="8">
    <source ref="1"/>
</evidence>
<evidence type="ECO:0000312" key="9">
    <source>
        <dbReference type="EMBL" id="QPD99022.1"/>
    </source>
</evidence>
<sequence length="72" mass="8361">MNFRFPFLLMITISLIGAVLTFGNDVRPRNQYGNEIFCPHQGFNQKCNAICKRKKYLLGFCDQKTCLCKVRP</sequence>
<name>SCX18_TITSE</name>
<keyword id="KW-1015">Disulfide bond</keyword>
<keyword id="KW-0872">Ion channel impairing toxin</keyword>
<keyword id="KW-0528">Neurotoxin</keyword>
<keyword id="KW-0964">Secreted</keyword>
<keyword id="KW-0732">Signal</keyword>
<keyword id="KW-0800">Toxin</keyword>
<keyword id="KW-0738">Voltage-gated sodium channel impairing toxin</keyword>
<proteinExistence type="inferred from homology"/>
<accession>A0A7S8MU59</accession>
<organism>
    <name type="scientific">Tityus serrulatus</name>
    <name type="common">Brazilian scorpion</name>
    <dbReference type="NCBI Taxonomy" id="6887"/>
    <lineage>
        <taxon>Eukaryota</taxon>
        <taxon>Metazoa</taxon>
        <taxon>Ecdysozoa</taxon>
        <taxon>Arthropoda</taxon>
        <taxon>Chelicerata</taxon>
        <taxon>Arachnida</taxon>
        <taxon>Scorpiones</taxon>
        <taxon>Buthida</taxon>
        <taxon>Buthoidea</taxon>
        <taxon>Buthidae</taxon>
        <taxon>Tityus</taxon>
    </lineage>
</organism>
<comment type="function">
    <text evidence="1">Binds to sodium channels (Nav) and affects the channel activation process.</text>
</comment>
<comment type="subcellular location">
    <subcellularLocation>
        <location evidence="7 8">Secreted</location>
    </subcellularLocation>
</comment>
<comment type="tissue specificity">
    <text evidence="7 8">Expressed by the venom gland.</text>
</comment>
<comment type="similarity">
    <text evidence="6">Belongs to the long (3 C-C) scorpion toxin superfamily.</text>
</comment>
<dbReference type="EMBL" id="MT081340">
    <property type="protein sequence ID" value="QPD99022.1"/>
    <property type="molecule type" value="mRNA"/>
</dbReference>
<dbReference type="SMR" id="A0A7S8MU59"/>
<dbReference type="GO" id="GO:0005576">
    <property type="term" value="C:extracellular region"/>
    <property type="evidence" value="ECO:0007669"/>
    <property type="project" value="UniProtKB-SubCell"/>
</dbReference>
<dbReference type="GO" id="GO:0017080">
    <property type="term" value="F:sodium channel regulator activity"/>
    <property type="evidence" value="ECO:0007669"/>
    <property type="project" value="UniProtKB-KW"/>
</dbReference>
<dbReference type="GO" id="GO:0090729">
    <property type="term" value="F:toxin activity"/>
    <property type="evidence" value="ECO:0007669"/>
    <property type="project" value="UniProtKB-KW"/>
</dbReference>
<dbReference type="InterPro" id="IPR036574">
    <property type="entry name" value="Scorpion_toxin-like_sf"/>
</dbReference>
<dbReference type="SUPFAM" id="SSF57095">
    <property type="entry name" value="Scorpion toxin-like"/>
    <property type="match status" value="1"/>
</dbReference>
<reference key="1">
    <citation type="journal article" date="2012" name="O. J. Gen.">
        <title>Transcriptome analysis of the Tityus serrulatus scorpion venom gland.</title>
        <authorList>
            <person name="Alvarenga E.R."/>
            <person name="Mendes T.M."/>
            <person name="Magalhaes B.F."/>
            <person name="Siqueira F.F."/>
            <person name="Dantas A.E."/>
            <person name="Barroca T.M."/>
            <person name="Horta C.C."/>
            <person name="Kalapothakis E."/>
        </authorList>
    </citation>
    <scope>NUCLEOTIDE SEQUENCE [MRNA]</scope>
    <source>
        <tissue>Venom gland</tissue>
    </source>
</reference>
<reference evidence="9" key="2">
    <citation type="journal article" date="2021" name="Toxicon">
        <title>Novel components of Tityus serrulatus venom: a transcriptomic approach.</title>
        <authorList>
            <person name="Kalapothakis Y."/>
            <person name="Miranda K."/>
            <person name="Pereira A.H."/>
            <person name="Witt A.S.A."/>
            <person name="Marani C."/>
            <person name="Martins A.P."/>
            <person name="Leal H.G."/>
            <person name="Campos-Junior E."/>
            <person name="Pimenta A.M.C."/>
            <person name="Borges A."/>
            <person name="Chavez-Olortegui C."/>
            <person name="Kalapothakis E."/>
        </authorList>
    </citation>
    <scope>NUCLEOTIDE SEQUENCE [MRNA]</scope>
    <source>
        <tissue>Telson</tissue>
    </source>
</reference>
<feature type="signal peptide" evidence="2">
    <location>
        <begin position="1"/>
        <end position="21"/>
    </location>
</feature>
<feature type="chain" id="PRO_5031515069" description="Putative sodium channel toxin Ts18">
    <location>
        <begin position="22"/>
        <end position="72"/>
    </location>
</feature>
<feature type="disulfide bond" evidence="3">
    <location>
        <begin position="38"/>
        <end position="61"/>
    </location>
</feature>
<feature type="disulfide bond" evidence="3">
    <location>
        <begin position="47"/>
        <end position="66"/>
    </location>
</feature>
<feature type="disulfide bond" evidence="3">
    <location>
        <begin position="51"/>
        <end position="68"/>
    </location>
</feature>